<comment type="function">
    <text evidence="1">ATP-binding RNA helicase involved in the biogenesis of 60S ribosomal subunits and is required for the normal formation of 25S and 5.8S rRNAs.</text>
</comment>
<comment type="catalytic activity">
    <reaction>
        <text>ATP + H2O = ADP + phosphate + H(+)</text>
        <dbReference type="Rhea" id="RHEA:13065"/>
        <dbReference type="ChEBI" id="CHEBI:15377"/>
        <dbReference type="ChEBI" id="CHEBI:15378"/>
        <dbReference type="ChEBI" id="CHEBI:30616"/>
        <dbReference type="ChEBI" id="CHEBI:43474"/>
        <dbReference type="ChEBI" id="CHEBI:456216"/>
        <dbReference type="EC" id="3.6.4.13"/>
    </reaction>
</comment>
<comment type="subunit">
    <text evidence="1">Associated with pre-ribosomal particles.</text>
</comment>
<comment type="subcellular location">
    <subcellularLocation>
        <location evidence="1">Nucleus</location>
        <location evidence="1">Nucleolus</location>
    </subcellularLocation>
</comment>
<comment type="domain">
    <text>The Q motif is unique to and characteristic of the DEAD box family of RNA helicases and controls ATP binding and hydrolysis.</text>
</comment>
<comment type="similarity">
    <text evidence="5">Belongs to the DEAD box helicase family. DDX51/DBP6 subfamily.</text>
</comment>
<accession>A7TFZ9</accession>
<organism>
    <name type="scientific">Vanderwaltozyma polyspora (strain ATCC 22028 / DSM 70294 / BCRC 21397 / CBS 2163 / NBRC 10782 / NRRL Y-8283 / UCD 57-17)</name>
    <name type="common">Kluyveromyces polysporus</name>
    <dbReference type="NCBI Taxonomy" id="436907"/>
    <lineage>
        <taxon>Eukaryota</taxon>
        <taxon>Fungi</taxon>
        <taxon>Dikarya</taxon>
        <taxon>Ascomycota</taxon>
        <taxon>Saccharomycotina</taxon>
        <taxon>Saccharomycetes</taxon>
        <taxon>Saccharomycetales</taxon>
        <taxon>Saccharomycetaceae</taxon>
        <taxon>Vanderwaltozyma</taxon>
    </lineage>
</organism>
<dbReference type="EC" id="3.6.4.13"/>
<dbReference type="EMBL" id="DS480385">
    <property type="protein sequence ID" value="EDO18756.1"/>
    <property type="molecule type" value="Genomic_DNA"/>
</dbReference>
<dbReference type="RefSeq" id="XP_001646614.1">
    <property type="nucleotide sequence ID" value="XM_001646564.1"/>
</dbReference>
<dbReference type="SMR" id="A7TFZ9"/>
<dbReference type="FunCoup" id="A7TFZ9">
    <property type="interactions" value="911"/>
</dbReference>
<dbReference type="STRING" id="436907.A7TFZ9"/>
<dbReference type="GeneID" id="5547069"/>
<dbReference type="KEGG" id="vpo:Kpol_1028p29"/>
<dbReference type="eggNOG" id="KOG0350">
    <property type="taxonomic scope" value="Eukaryota"/>
</dbReference>
<dbReference type="HOGENOM" id="CLU_003041_15_2_1"/>
<dbReference type="InParanoid" id="A7TFZ9"/>
<dbReference type="OMA" id="HLEWLVI"/>
<dbReference type="OrthoDB" id="3370at2759"/>
<dbReference type="PhylomeDB" id="A7TFZ9"/>
<dbReference type="Proteomes" id="UP000000267">
    <property type="component" value="Unassembled WGS sequence"/>
</dbReference>
<dbReference type="GO" id="GO:0005730">
    <property type="term" value="C:nucleolus"/>
    <property type="evidence" value="ECO:0007669"/>
    <property type="project" value="UniProtKB-SubCell"/>
</dbReference>
<dbReference type="GO" id="GO:0030687">
    <property type="term" value="C:preribosome, large subunit precursor"/>
    <property type="evidence" value="ECO:0007669"/>
    <property type="project" value="EnsemblFungi"/>
</dbReference>
<dbReference type="GO" id="GO:0005524">
    <property type="term" value="F:ATP binding"/>
    <property type="evidence" value="ECO:0007669"/>
    <property type="project" value="UniProtKB-KW"/>
</dbReference>
<dbReference type="GO" id="GO:0016887">
    <property type="term" value="F:ATP hydrolysis activity"/>
    <property type="evidence" value="ECO:0007669"/>
    <property type="project" value="RHEA"/>
</dbReference>
<dbReference type="GO" id="GO:0003723">
    <property type="term" value="F:RNA binding"/>
    <property type="evidence" value="ECO:0007669"/>
    <property type="project" value="UniProtKB-KW"/>
</dbReference>
<dbReference type="GO" id="GO:0003724">
    <property type="term" value="F:RNA helicase activity"/>
    <property type="evidence" value="ECO:0007669"/>
    <property type="project" value="UniProtKB-EC"/>
</dbReference>
<dbReference type="GO" id="GO:0000466">
    <property type="term" value="P:maturation of 5.8S rRNA from tricistronic rRNA transcript (SSU-rRNA, 5.8S rRNA, LSU-rRNA)"/>
    <property type="evidence" value="ECO:0007669"/>
    <property type="project" value="EnsemblFungi"/>
</dbReference>
<dbReference type="GO" id="GO:0000463">
    <property type="term" value="P:maturation of LSU-rRNA from tricistronic rRNA transcript (SSU-rRNA, 5.8S rRNA, LSU-rRNA)"/>
    <property type="evidence" value="ECO:0007669"/>
    <property type="project" value="EnsemblFungi"/>
</dbReference>
<dbReference type="CDD" id="cd17956">
    <property type="entry name" value="DEADc_DDX51"/>
    <property type="match status" value="1"/>
</dbReference>
<dbReference type="CDD" id="cd18787">
    <property type="entry name" value="SF2_C_DEAD"/>
    <property type="match status" value="1"/>
</dbReference>
<dbReference type="Gene3D" id="3.40.50.300">
    <property type="entry name" value="P-loop containing nucleotide triphosphate hydrolases"/>
    <property type="match status" value="2"/>
</dbReference>
<dbReference type="InterPro" id="IPR011545">
    <property type="entry name" value="DEAD/DEAH_box_helicase_dom"/>
</dbReference>
<dbReference type="InterPro" id="IPR014001">
    <property type="entry name" value="Helicase_ATP-bd"/>
</dbReference>
<dbReference type="InterPro" id="IPR001650">
    <property type="entry name" value="Helicase_C-like"/>
</dbReference>
<dbReference type="InterPro" id="IPR027417">
    <property type="entry name" value="P-loop_NTPase"/>
</dbReference>
<dbReference type="InterPro" id="IPR000629">
    <property type="entry name" value="RNA-helicase_DEAD-box_CS"/>
</dbReference>
<dbReference type="PANTHER" id="PTHR24031">
    <property type="entry name" value="RNA HELICASE"/>
    <property type="match status" value="1"/>
</dbReference>
<dbReference type="Pfam" id="PF00270">
    <property type="entry name" value="DEAD"/>
    <property type="match status" value="1"/>
</dbReference>
<dbReference type="Pfam" id="PF00271">
    <property type="entry name" value="Helicase_C"/>
    <property type="match status" value="1"/>
</dbReference>
<dbReference type="SMART" id="SM00487">
    <property type="entry name" value="DEXDc"/>
    <property type="match status" value="1"/>
</dbReference>
<dbReference type="SMART" id="SM00490">
    <property type="entry name" value="HELICc"/>
    <property type="match status" value="1"/>
</dbReference>
<dbReference type="SUPFAM" id="SSF52540">
    <property type="entry name" value="P-loop containing nucleoside triphosphate hydrolases"/>
    <property type="match status" value="1"/>
</dbReference>
<dbReference type="PROSITE" id="PS00039">
    <property type="entry name" value="DEAD_ATP_HELICASE"/>
    <property type="match status" value="1"/>
</dbReference>
<dbReference type="PROSITE" id="PS51192">
    <property type="entry name" value="HELICASE_ATP_BIND_1"/>
    <property type="match status" value="1"/>
</dbReference>
<dbReference type="PROSITE" id="PS51194">
    <property type="entry name" value="HELICASE_CTER"/>
    <property type="match status" value="1"/>
</dbReference>
<feature type="chain" id="PRO_0000310239" description="ATP-dependent RNA helicase DBP6">
    <location>
        <begin position="1"/>
        <end position="637"/>
    </location>
</feature>
<feature type="domain" description="Helicase ATP-binding" evidence="2">
    <location>
        <begin position="222"/>
        <end position="402"/>
    </location>
</feature>
<feature type="domain" description="Helicase C-terminal" evidence="3">
    <location>
        <begin position="434"/>
        <end position="608"/>
    </location>
</feature>
<feature type="region of interest" description="Disordered" evidence="4">
    <location>
        <begin position="1"/>
        <end position="93"/>
    </location>
</feature>
<feature type="short sequence motif" description="Q motif">
    <location>
        <begin position="198"/>
        <end position="206"/>
    </location>
</feature>
<feature type="short sequence motif" description="DEAD box">
    <location>
        <begin position="342"/>
        <end position="345"/>
    </location>
</feature>
<feature type="compositionally biased region" description="Acidic residues" evidence="4">
    <location>
        <begin position="33"/>
        <end position="84"/>
    </location>
</feature>
<feature type="binding site" evidence="2">
    <location>
        <begin position="235"/>
        <end position="242"/>
    </location>
    <ligand>
        <name>ATP</name>
        <dbReference type="ChEBI" id="CHEBI:30616"/>
    </ligand>
</feature>
<keyword id="KW-0067">ATP-binding</keyword>
<keyword id="KW-0347">Helicase</keyword>
<keyword id="KW-0378">Hydrolase</keyword>
<keyword id="KW-0547">Nucleotide-binding</keyword>
<keyword id="KW-0539">Nucleus</keyword>
<keyword id="KW-1185">Reference proteome</keyword>
<keyword id="KW-0690">Ribosome biogenesis</keyword>
<keyword id="KW-0694">RNA-binding</keyword>
<keyword id="KW-0698">rRNA processing</keyword>
<sequence>MFAVRFDPSQLVEESVEDEAPKKVIPLKRSKSDEEDESSEEETESSEDEEEKEKEEVADEDSMDVDDESSGDDDEEAEEGEVDAASDHPDKHNSVMSRFQQTLALQDKMDSESLVNENEEVNDENIVESHNLERIPQPAKVKESAVAPAAVSQYKSAAWLNTETIHYDSSMVRKFSDFEDQIDPKLLKNIQQNFSTDTFPIQSILLETLLPTLNFSYNITKKNFTRRVGDVLVNASTGSGKTLAYSIPILQILSKRTVNKLRALVIVPTKLLINQVYETFNNLAQGTSLIVSISKLENSLKEENKKLLQNEPDILITTPGRLVDHLQSGAVNLRNLKFLVLDEADRLLNQSFQNWCNELLNKLKTDKQDHMPGNIVKMVFSATLTTNTEKLHGLQFYNPKLFVMDSVKLYHLPRMLQEYNLHIPTAKTSYKPLFLLRLLSEINGSKMLVFVKSNESSLRLASLLSIMIEHKLGSQFDINSVNSNNTKAENRRIVNEFASNNNTSKVQVLITTDVMSRGVDINDITDVLNYDVPISSQQYIHRCGRTARAQSKGTAYNMLIGKGERTFWATHIDNDISRDIDGCQPQVWGQHDQQNQKDEGQEEEAQVLPLLTVDPETESIYKECLNSLKEKVDTNRK</sequence>
<proteinExistence type="inferred from homology"/>
<evidence type="ECO:0000250" key="1"/>
<evidence type="ECO:0000255" key="2">
    <source>
        <dbReference type="PROSITE-ProRule" id="PRU00541"/>
    </source>
</evidence>
<evidence type="ECO:0000255" key="3">
    <source>
        <dbReference type="PROSITE-ProRule" id="PRU00542"/>
    </source>
</evidence>
<evidence type="ECO:0000256" key="4">
    <source>
        <dbReference type="SAM" id="MobiDB-lite"/>
    </source>
</evidence>
<evidence type="ECO:0000305" key="5"/>
<name>DBP6_VANPO</name>
<protein>
    <recommendedName>
        <fullName>ATP-dependent RNA helicase DBP6</fullName>
        <ecNumber>3.6.4.13</ecNumber>
    </recommendedName>
</protein>
<reference key="1">
    <citation type="journal article" date="2007" name="Proc. Natl. Acad. Sci. U.S.A.">
        <title>Independent sorting-out of thousands of duplicated gene pairs in two yeast species descended from a whole-genome duplication.</title>
        <authorList>
            <person name="Scannell D.R."/>
            <person name="Frank A.C."/>
            <person name="Conant G.C."/>
            <person name="Byrne K.P."/>
            <person name="Woolfit M."/>
            <person name="Wolfe K.H."/>
        </authorList>
    </citation>
    <scope>NUCLEOTIDE SEQUENCE [LARGE SCALE GENOMIC DNA]</scope>
    <source>
        <strain>ATCC 22028 / DSM 70294 / BCRC 21397 / CBS 2163 / NBRC 10782 / NRRL Y-8283 / UCD 57-17</strain>
    </source>
</reference>
<gene>
    <name type="primary">DBP6</name>
    <name type="ORF">Kpol_1028p29</name>
</gene>